<evidence type="ECO:0000255" key="1">
    <source>
        <dbReference type="HAMAP-Rule" id="MF_00633"/>
    </source>
</evidence>
<proteinExistence type="inferred from homology"/>
<comment type="function">
    <text evidence="1">Component of the cytochrome b6-f complex, which mediates electron transfer between photosystem II (PSII) and photosystem I (PSI), cyclic electron flow around PSI, and state transitions.</text>
</comment>
<comment type="cofactor">
    <cofactor evidence="1">
        <name>heme b</name>
        <dbReference type="ChEBI" id="CHEBI:60344"/>
    </cofactor>
    <text evidence="1">Binds 2 heme b groups non-covalently with two histidine residues as axial ligands.</text>
</comment>
<comment type="cofactor">
    <cofactor evidence="1">
        <name>heme c</name>
        <dbReference type="ChEBI" id="CHEBI:61717"/>
    </cofactor>
    <text evidence="1">Binds one heme group covalently by a single cysteine link with no axial amino acid ligand. This heme was named heme ci.</text>
</comment>
<comment type="subunit">
    <text evidence="1">The 4 large subunits of the cytochrome b6-f complex are cytochrome b6, subunit IV (17 kDa polypeptide, PetD), cytochrome f and the Rieske protein, while the 4 small subunits are PetG, PetL, PetM and PetN. The complex functions as a dimer.</text>
</comment>
<comment type="subcellular location">
    <subcellularLocation>
        <location evidence="1">Plastid</location>
        <location evidence="1">Chloroplast thylakoid membrane</location>
        <topology evidence="1">Multi-pass membrane protein</topology>
    </subcellularLocation>
</comment>
<comment type="miscellaneous">
    <text evidence="1">Heme 1 (or BH or b566) is high-potential and absorbs at about 566 nm, and heme 2 (or BL or b562) is low-potential and absorbs at about 562 nm.</text>
</comment>
<comment type="similarity">
    <text evidence="1">Belongs to the cytochrome b family. PetB subfamily.</text>
</comment>
<keyword id="KW-0150">Chloroplast</keyword>
<keyword id="KW-0249">Electron transport</keyword>
<keyword id="KW-0349">Heme</keyword>
<keyword id="KW-0408">Iron</keyword>
<keyword id="KW-0472">Membrane</keyword>
<keyword id="KW-0479">Metal-binding</keyword>
<keyword id="KW-0602">Photosynthesis</keyword>
<keyword id="KW-0934">Plastid</keyword>
<keyword id="KW-0793">Thylakoid</keyword>
<keyword id="KW-0812">Transmembrane</keyword>
<keyword id="KW-1133">Transmembrane helix</keyword>
<keyword id="KW-0813">Transport</keyword>
<reference key="1">
    <citation type="journal article" date="2006" name="Mol. Biol. Evol.">
        <title>The chloroplast genome sequence of Chara vulgaris sheds new light into the closest green algal relatives of land plants.</title>
        <authorList>
            <person name="Turmel M."/>
            <person name="Otis C."/>
            <person name="Lemieux C."/>
        </authorList>
    </citation>
    <scope>NUCLEOTIDE SEQUENCE [LARGE SCALE GENOMIC DNA]</scope>
</reference>
<gene>
    <name evidence="1" type="primary">petB</name>
</gene>
<protein>
    <recommendedName>
        <fullName evidence="1">Cytochrome b6</fullName>
    </recommendedName>
</protein>
<dbReference type="EMBL" id="DQ229107">
    <property type="protein sequence ID" value="ABA61920.1"/>
    <property type="molecule type" value="Genomic_DNA"/>
</dbReference>
<dbReference type="RefSeq" id="YP_635776.1">
    <property type="nucleotide sequence ID" value="NC_008097.1"/>
</dbReference>
<dbReference type="SMR" id="Q1ACH1"/>
<dbReference type="GeneID" id="4100261"/>
<dbReference type="GO" id="GO:0009535">
    <property type="term" value="C:chloroplast thylakoid membrane"/>
    <property type="evidence" value="ECO:0007669"/>
    <property type="project" value="UniProtKB-SubCell"/>
</dbReference>
<dbReference type="GO" id="GO:0045158">
    <property type="term" value="F:electron transporter, transferring electrons within cytochrome b6/f complex of photosystem II activity"/>
    <property type="evidence" value="ECO:0007669"/>
    <property type="project" value="UniProtKB-UniRule"/>
</dbReference>
<dbReference type="GO" id="GO:0046872">
    <property type="term" value="F:metal ion binding"/>
    <property type="evidence" value="ECO:0007669"/>
    <property type="project" value="UniProtKB-KW"/>
</dbReference>
<dbReference type="GO" id="GO:0016491">
    <property type="term" value="F:oxidoreductase activity"/>
    <property type="evidence" value="ECO:0007669"/>
    <property type="project" value="InterPro"/>
</dbReference>
<dbReference type="GO" id="GO:0015979">
    <property type="term" value="P:photosynthesis"/>
    <property type="evidence" value="ECO:0007669"/>
    <property type="project" value="UniProtKB-UniRule"/>
</dbReference>
<dbReference type="GO" id="GO:0022904">
    <property type="term" value="P:respiratory electron transport chain"/>
    <property type="evidence" value="ECO:0007669"/>
    <property type="project" value="InterPro"/>
</dbReference>
<dbReference type="CDD" id="cd00284">
    <property type="entry name" value="Cytochrome_b_N"/>
    <property type="match status" value="1"/>
</dbReference>
<dbReference type="FunFam" id="1.20.810.10:FF:000001">
    <property type="entry name" value="Cytochrome b6"/>
    <property type="match status" value="1"/>
</dbReference>
<dbReference type="Gene3D" id="1.20.810.10">
    <property type="entry name" value="Cytochrome Bc1 Complex, Chain C"/>
    <property type="match status" value="1"/>
</dbReference>
<dbReference type="HAMAP" id="MF_00633">
    <property type="entry name" value="Cytb6_f_cytb6"/>
    <property type="match status" value="1"/>
</dbReference>
<dbReference type="InterPro" id="IPR005797">
    <property type="entry name" value="Cyt_b/b6_N"/>
</dbReference>
<dbReference type="InterPro" id="IPR023530">
    <property type="entry name" value="Cyt_B6_PetB"/>
</dbReference>
<dbReference type="InterPro" id="IPR027387">
    <property type="entry name" value="Cytb/b6-like_sf"/>
</dbReference>
<dbReference type="InterPro" id="IPR048259">
    <property type="entry name" value="Cytochrome_b_N_euk/bac"/>
</dbReference>
<dbReference type="InterPro" id="IPR016174">
    <property type="entry name" value="Di-haem_cyt_TM"/>
</dbReference>
<dbReference type="NCBIfam" id="NF002990">
    <property type="entry name" value="PRK03735.1"/>
    <property type="match status" value="1"/>
</dbReference>
<dbReference type="PANTHER" id="PTHR19271">
    <property type="entry name" value="CYTOCHROME B"/>
    <property type="match status" value="1"/>
</dbReference>
<dbReference type="PANTHER" id="PTHR19271:SF16">
    <property type="entry name" value="CYTOCHROME B"/>
    <property type="match status" value="1"/>
</dbReference>
<dbReference type="Pfam" id="PF00033">
    <property type="entry name" value="Cytochrome_B"/>
    <property type="match status" value="1"/>
</dbReference>
<dbReference type="PIRSF" id="PIRSF000032">
    <property type="entry name" value="Cytochrome_b6"/>
    <property type="match status" value="1"/>
</dbReference>
<dbReference type="SUPFAM" id="SSF81342">
    <property type="entry name" value="Transmembrane di-heme cytochromes"/>
    <property type="match status" value="1"/>
</dbReference>
<dbReference type="PROSITE" id="PS51002">
    <property type="entry name" value="CYTB_NTER"/>
    <property type="match status" value="1"/>
</dbReference>
<name>CYB6_CHAVU</name>
<feature type="chain" id="PRO_0000275309" description="Cytochrome b6">
    <location>
        <begin position="1"/>
        <end position="215"/>
    </location>
</feature>
<feature type="transmembrane region" description="Helical" evidence="1">
    <location>
        <begin position="32"/>
        <end position="52"/>
    </location>
</feature>
<feature type="transmembrane region" description="Helical" evidence="1">
    <location>
        <begin position="90"/>
        <end position="110"/>
    </location>
</feature>
<feature type="transmembrane region" description="Helical" evidence="1">
    <location>
        <begin position="116"/>
        <end position="136"/>
    </location>
</feature>
<feature type="transmembrane region" description="Helical" evidence="1">
    <location>
        <begin position="186"/>
        <end position="206"/>
    </location>
</feature>
<feature type="binding site" description="covalent" evidence="1">
    <location>
        <position position="35"/>
    </location>
    <ligand>
        <name>heme c</name>
        <dbReference type="ChEBI" id="CHEBI:61717"/>
    </ligand>
</feature>
<feature type="binding site" description="axial binding residue" evidence="1">
    <location>
        <position position="86"/>
    </location>
    <ligand>
        <name>heme b</name>
        <dbReference type="ChEBI" id="CHEBI:60344"/>
        <label>2</label>
    </ligand>
    <ligandPart>
        <name>Fe</name>
        <dbReference type="ChEBI" id="CHEBI:18248"/>
    </ligandPart>
</feature>
<feature type="binding site" description="axial binding residue" evidence="1">
    <location>
        <position position="100"/>
    </location>
    <ligand>
        <name>heme b</name>
        <dbReference type="ChEBI" id="CHEBI:60344"/>
        <label>1</label>
    </ligand>
    <ligandPart>
        <name>Fe</name>
        <dbReference type="ChEBI" id="CHEBI:18248"/>
    </ligandPart>
</feature>
<feature type="binding site" description="axial binding residue" evidence="1">
    <location>
        <position position="187"/>
    </location>
    <ligand>
        <name>heme b</name>
        <dbReference type="ChEBI" id="CHEBI:60344"/>
        <label>2</label>
    </ligand>
    <ligandPart>
        <name>Fe</name>
        <dbReference type="ChEBI" id="CHEBI:18248"/>
    </ligandPart>
</feature>
<feature type="binding site" description="axial binding residue" evidence="1">
    <location>
        <position position="202"/>
    </location>
    <ligand>
        <name>heme b</name>
        <dbReference type="ChEBI" id="CHEBI:60344"/>
        <label>1</label>
    </ligand>
    <ligandPart>
        <name>Fe</name>
        <dbReference type="ChEBI" id="CHEBI:18248"/>
    </ligandPart>
</feature>
<sequence>MGKVYDWFEERLEIQAIADDITSKYVPPHVNIFYCLGGITLTCFIVQVATGFAMTFYYRPTVTEAFASIQYIMTEVNFGWLIRSVHRWSASMMVLMMILHVFRVYLTGGFKKPRELTWITGVVLAVLTVSFGVTGYSLPWDQIGYWAVKIVTGVPEAIPIVGSSLVELLRGSVSVGQSTLTRFYSLHTFVLPLLTAVFMLMHFLMIRKQGISGPL</sequence>
<geneLocation type="chloroplast"/>
<accession>Q1ACH1</accession>
<organism>
    <name type="scientific">Chara vulgaris</name>
    <name type="common">Common stonewort</name>
    <dbReference type="NCBI Taxonomy" id="55564"/>
    <lineage>
        <taxon>Eukaryota</taxon>
        <taxon>Viridiplantae</taxon>
        <taxon>Streptophyta</taxon>
        <taxon>Charophyceae</taxon>
        <taxon>Charales</taxon>
        <taxon>Characeae</taxon>
        <taxon>Chara</taxon>
    </lineage>
</organism>